<proteinExistence type="inferred from homology"/>
<gene>
    <name evidence="1" type="primary">eutC</name>
    <name type="ordered locus">ECP_2461</name>
</gene>
<accession>Q0TF29</accession>
<name>EUTC_ECOL5</name>
<feature type="chain" id="PRO_1000025854" description="Ethanolamine ammonia-lyase small subunit">
    <location>
        <begin position="1"/>
        <end position="295"/>
    </location>
</feature>
<feature type="binding site" evidence="1">
    <location>
        <position position="207"/>
    </location>
    <ligand>
        <name>adenosylcob(III)alamin</name>
        <dbReference type="ChEBI" id="CHEBI:18408"/>
    </ligand>
</feature>
<feature type="binding site" evidence="1">
    <location>
        <position position="228"/>
    </location>
    <ligand>
        <name>adenosylcob(III)alamin</name>
        <dbReference type="ChEBI" id="CHEBI:18408"/>
    </ligand>
</feature>
<feature type="binding site" evidence="1">
    <location>
        <position position="258"/>
    </location>
    <ligand>
        <name>adenosylcob(III)alamin</name>
        <dbReference type="ChEBI" id="CHEBI:18408"/>
    </ligand>
</feature>
<reference key="1">
    <citation type="journal article" date="2006" name="Mol. Microbiol.">
        <title>Role of pathogenicity island-associated integrases in the genome plasticity of uropathogenic Escherichia coli strain 536.</title>
        <authorList>
            <person name="Hochhut B."/>
            <person name="Wilde C."/>
            <person name="Balling G."/>
            <person name="Middendorf B."/>
            <person name="Dobrindt U."/>
            <person name="Brzuszkiewicz E."/>
            <person name="Gottschalk G."/>
            <person name="Carniel E."/>
            <person name="Hacker J."/>
        </authorList>
    </citation>
    <scope>NUCLEOTIDE SEQUENCE [LARGE SCALE GENOMIC DNA]</scope>
    <source>
        <strain>536 / UPEC</strain>
    </source>
</reference>
<protein>
    <recommendedName>
        <fullName evidence="1">Ethanolamine ammonia-lyase small subunit</fullName>
        <shortName evidence="1">EAL small subunit</shortName>
        <ecNumber evidence="1">4.3.1.7</ecNumber>
    </recommendedName>
</protein>
<organism>
    <name type="scientific">Escherichia coli O6:K15:H31 (strain 536 / UPEC)</name>
    <dbReference type="NCBI Taxonomy" id="362663"/>
    <lineage>
        <taxon>Bacteria</taxon>
        <taxon>Pseudomonadati</taxon>
        <taxon>Pseudomonadota</taxon>
        <taxon>Gammaproteobacteria</taxon>
        <taxon>Enterobacterales</taxon>
        <taxon>Enterobacteriaceae</taxon>
        <taxon>Escherichia</taxon>
    </lineage>
</organism>
<dbReference type="EC" id="4.3.1.7" evidence="1"/>
<dbReference type="EMBL" id="CP000247">
    <property type="protein sequence ID" value="ABG70450.1"/>
    <property type="molecule type" value="Genomic_DNA"/>
</dbReference>
<dbReference type="RefSeq" id="WP_000372316.1">
    <property type="nucleotide sequence ID" value="NC_008253.1"/>
</dbReference>
<dbReference type="SMR" id="Q0TF29"/>
<dbReference type="KEGG" id="ecp:ECP_2461"/>
<dbReference type="HOGENOM" id="CLU_068224_0_0_6"/>
<dbReference type="UniPathway" id="UPA00560"/>
<dbReference type="Proteomes" id="UP000009182">
    <property type="component" value="Chromosome"/>
</dbReference>
<dbReference type="GO" id="GO:0009350">
    <property type="term" value="C:ethanolamine ammonia-lyase complex"/>
    <property type="evidence" value="ECO:0007669"/>
    <property type="project" value="UniProtKB-UniRule"/>
</dbReference>
<dbReference type="GO" id="GO:0031471">
    <property type="term" value="C:ethanolamine degradation polyhedral organelle"/>
    <property type="evidence" value="ECO:0007669"/>
    <property type="project" value="UniProtKB-UniRule"/>
</dbReference>
<dbReference type="GO" id="GO:0031419">
    <property type="term" value="F:cobalamin binding"/>
    <property type="evidence" value="ECO:0007669"/>
    <property type="project" value="UniProtKB-UniRule"/>
</dbReference>
<dbReference type="GO" id="GO:0008851">
    <property type="term" value="F:ethanolamine ammonia-lyase activity"/>
    <property type="evidence" value="ECO:0007669"/>
    <property type="project" value="UniProtKB-UniRule"/>
</dbReference>
<dbReference type="GO" id="GO:0006520">
    <property type="term" value="P:amino acid metabolic process"/>
    <property type="evidence" value="ECO:0007669"/>
    <property type="project" value="InterPro"/>
</dbReference>
<dbReference type="GO" id="GO:0046336">
    <property type="term" value="P:ethanolamine catabolic process"/>
    <property type="evidence" value="ECO:0007669"/>
    <property type="project" value="UniProtKB-UniRule"/>
</dbReference>
<dbReference type="FunFam" id="3.40.50.11240:FF:000001">
    <property type="entry name" value="Ethanolamine ammonia-lyase light chain"/>
    <property type="match status" value="1"/>
</dbReference>
<dbReference type="Gene3D" id="6.10.140.690">
    <property type="match status" value="1"/>
</dbReference>
<dbReference type="Gene3D" id="6.10.250.2060">
    <property type="match status" value="1"/>
</dbReference>
<dbReference type="Gene3D" id="3.40.50.11240">
    <property type="entry name" value="Ethanolamine ammonia-lyase light chain (EutC)"/>
    <property type="match status" value="1"/>
</dbReference>
<dbReference type="HAMAP" id="MF_00601">
    <property type="entry name" value="EutC"/>
    <property type="match status" value="1"/>
</dbReference>
<dbReference type="InterPro" id="IPR009246">
    <property type="entry name" value="EutC"/>
</dbReference>
<dbReference type="InterPro" id="IPR042251">
    <property type="entry name" value="EutC_C"/>
</dbReference>
<dbReference type="NCBIfam" id="NF003971">
    <property type="entry name" value="PRK05465.1"/>
    <property type="match status" value="1"/>
</dbReference>
<dbReference type="PANTHER" id="PTHR39330">
    <property type="entry name" value="ETHANOLAMINE AMMONIA-LYASE LIGHT CHAIN"/>
    <property type="match status" value="1"/>
</dbReference>
<dbReference type="PANTHER" id="PTHR39330:SF1">
    <property type="entry name" value="ETHANOLAMINE AMMONIA-LYASE SMALL SUBUNIT"/>
    <property type="match status" value="1"/>
</dbReference>
<dbReference type="Pfam" id="PF05985">
    <property type="entry name" value="EutC"/>
    <property type="match status" value="1"/>
</dbReference>
<dbReference type="PIRSF" id="PIRSF018982">
    <property type="entry name" value="EutC"/>
    <property type="match status" value="1"/>
</dbReference>
<evidence type="ECO:0000255" key="1">
    <source>
        <dbReference type="HAMAP-Rule" id="MF_00601"/>
    </source>
</evidence>
<sequence>MDQKQIEEIVRSVMASMGQAAPAPSEAKCATTNCAAPVTSESCALDLGSAEAKAWIGVENPHRADVLTELRRSTVARVCTGRAGPRPRTQALLRFLADHSRSKDTVLKEVPEEWVKAQGLLEVRSEISDKNLYLTRPDMGRRLCAEAVEALKAQCVANPDVQVVISDGLSTDAITVNYEEILPPLMAGLKQAGLKVGTPFFVRYGRVKIEDQIGEILGAKVVILLVGERPGLGQSESLSCYAVYSPRMATTVEADRTCISNIHQGGTPPVEAAAVIVDLAKRMLEQKASGINMTR</sequence>
<keyword id="KW-1283">Bacterial microcompartment</keyword>
<keyword id="KW-0846">Cobalamin</keyword>
<keyword id="KW-0170">Cobalt</keyword>
<keyword id="KW-0456">Lyase</keyword>
<comment type="function">
    <text evidence="1">Catalyzes the deamination of various vicinal amino-alcohols to oxo compounds. Allows this organism to utilize ethanolamine as the sole source of nitrogen and carbon in the presence of external vitamin B12.</text>
</comment>
<comment type="catalytic activity">
    <reaction evidence="1">
        <text>ethanolamine = acetaldehyde + NH4(+)</text>
        <dbReference type="Rhea" id="RHEA:15313"/>
        <dbReference type="ChEBI" id="CHEBI:15343"/>
        <dbReference type="ChEBI" id="CHEBI:28938"/>
        <dbReference type="ChEBI" id="CHEBI:57603"/>
        <dbReference type="EC" id="4.3.1.7"/>
    </reaction>
</comment>
<comment type="cofactor">
    <cofactor evidence="1">
        <name>adenosylcob(III)alamin</name>
        <dbReference type="ChEBI" id="CHEBI:18408"/>
    </cofactor>
    <text evidence="1">Binds between the large and small subunits.</text>
</comment>
<comment type="pathway">
    <text evidence="1">Amine and polyamine degradation; ethanolamine degradation.</text>
</comment>
<comment type="subunit">
    <text evidence="1">The basic unit is a heterodimer which dimerizes to form tetramers. The heterotetramers trimerize; 6 large subunits form a core ring with 6 small subunits projecting outwards.</text>
</comment>
<comment type="subcellular location">
    <subcellularLocation>
        <location evidence="1">Bacterial microcompartment</location>
    </subcellularLocation>
</comment>
<comment type="similarity">
    <text evidence="1">Belongs to the EutC family.</text>
</comment>